<accession>P0C1P7</accession>
<accession>P21545</accession>
<keyword id="KW-1003">Cell membrane</keyword>
<keyword id="KW-0378">Hydrolase</keyword>
<keyword id="KW-0472">Membrane</keyword>
<keyword id="KW-0645">Protease</keyword>
<keyword id="KW-0673">Quorum sensing</keyword>
<keyword id="KW-0812">Transmembrane</keyword>
<keyword id="KW-1133">Transmembrane helix</keyword>
<keyword id="KW-0843">Virulence</keyword>
<proteinExistence type="evidence at protein level"/>
<comment type="function">
    <text evidence="2">Essential for the production of a quorum sensing system signal molecule, the autoinducing peptide (AIP). This quorum sensing system is responsible for the regulation of the expression of virulence factor genes. Involved in the proteolytic processing of AgrD, the precursor of AIP.</text>
</comment>
<comment type="subcellular location">
    <subcellularLocation>
        <location evidence="2">Cell membrane</location>
        <topology evidence="2">Multi-pass membrane protein</topology>
    </subcellularLocation>
</comment>
<comment type="similarity">
    <text evidence="3">Belongs to the AgrB family.</text>
</comment>
<feature type="chain" id="PRO_0000168124" description="Accessory gene regulator protein B">
    <location>
        <begin position="1"/>
        <end position="189"/>
    </location>
</feature>
<feature type="transmembrane region" description="Helical" evidence="1">
    <location>
        <begin position="49"/>
        <end position="69"/>
    </location>
</feature>
<feature type="transmembrane region" description="Helical" evidence="1">
    <location>
        <begin position="81"/>
        <end position="100"/>
    </location>
</feature>
<feature type="transmembrane region" description="Helical" evidence="1">
    <location>
        <begin position="110"/>
        <end position="130"/>
    </location>
</feature>
<feature type="transmembrane region" description="Helical" evidence="1">
    <location>
        <begin position="143"/>
        <end position="163"/>
    </location>
</feature>
<feature type="transmembrane region" description="Helical" evidence="1">
    <location>
        <begin position="164"/>
        <end position="184"/>
    </location>
</feature>
<name>AGRB_STAAU</name>
<dbReference type="EC" id="3.4.-.-"/>
<dbReference type="EMBL" id="X52543">
    <property type="protein sequence ID" value="CAA36781.1"/>
    <property type="molecule type" value="Genomic_DNA"/>
</dbReference>
<dbReference type="PIR" id="JQ0387">
    <property type="entry name" value="JQ0387"/>
</dbReference>
<dbReference type="RefSeq" id="WP_001105707.1">
    <property type="nucleotide sequence ID" value="NZ_WWFR01000006.1"/>
</dbReference>
<dbReference type="MEROPS" id="C75.001"/>
<dbReference type="OMA" id="PADHENK"/>
<dbReference type="GO" id="GO:0005886">
    <property type="term" value="C:plasma membrane"/>
    <property type="evidence" value="ECO:0007669"/>
    <property type="project" value="UniProtKB-SubCell"/>
</dbReference>
<dbReference type="GO" id="GO:0008233">
    <property type="term" value="F:peptidase activity"/>
    <property type="evidence" value="ECO:0007669"/>
    <property type="project" value="UniProtKB-UniRule"/>
</dbReference>
<dbReference type="GO" id="GO:0006508">
    <property type="term" value="P:proteolysis"/>
    <property type="evidence" value="ECO:0007669"/>
    <property type="project" value="UniProtKB-KW"/>
</dbReference>
<dbReference type="GO" id="GO:0009372">
    <property type="term" value="P:quorum sensing"/>
    <property type="evidence" value="ECO:0007669"/>
    <property type="project" value="UniProtKB-UniRule"/>
</dbReference>
<dbReference type="HAMAP" id="MF_00784">
    <property type="entry name" value="AgrB"/>
    <property type="match status" value="1"/>
</dbReference>
<dbReference type="InterPro" id="IPR006741">
    <property type="entry name" value="AgrB"/>
</dbReference>
<dbReference type="Pfam" id="PF04647">
    <property type="entry name" value="AgrB"/>
    <property type="match status" value="1"/>
</dbReference>
<dbReference type="SMART" id="SM00793">
    <property type="entry name" value="AgrB"/>
    <property type="match status" value="1"/>
</dbReference>
<reference key="1">
    <citation type="journal article" date="1995" name="Mol. Gen. Genet.">
        <title>The agr P2 operon: an autocatalytic sensory transduction system in Staphylococcus aureus.</title>
        <authorList>
            <person name="Novick R.P."/>
            <person name="Projan S.J."/>
            <person name="Kornblum J."/>
            <person name="Ross H.F."/>
            <person name="Ji G."/>
            <person name="Kreiswirth B."/>
            <person name="Vandenesch F."/>
            <person name="Moghazeh S."/>
        </authorList>
    </citation>
    <scope>NUCLEOTIDE SEQUENCE [GENOMIC DNA]</scope>
    <source>
        <strain>Isolate GAL</strain>
    </source>
</reference>
<reference key="2">
    <citation type="journal article" date="2002" name="J. Biol. Chem.">
        <title>Transmembrane topology of AgrB, the protein involved in the post-translational modification of AgrD in Staphylococcus aureus.</title>
        <authorList>
            <person name="Zhang L."/>
            <person name="Gray L."/>
            <person name="Novick R.P."/>
            <person name="Ji G."/>
        </authorList>
    </citation>
    <scope>FUNCTION</scope>
    <scope>SUBCELLULAR LOCATION</scope>
    <scope>TOPOLOGY</scope>
</reference>
<sequence length="189" mass="21930">MNYFDNKIDQFATYLQKRNNLDHIQFLQVRLGMQVLAKNIGKLIVMYTIAYILNIFLFTLITNLTFYLIRRHAHGAHAPSSFWCYVESIILFILLPLVIVNFHINFLIMIILTVISLGVISVYAPAATKKKPIPVRLIKRKKYYAIIVSLTLFIITLIIKEPFAQFIQLGIIIEAITLLPIFFIKEDLK</sequence>
<protein>
    <recommendedName>
        <fullName>Accessory gene regulator protein B</fullName>
        <ecNumber>3.4.-.-</ecNumber>
    </recommendedName>
</protein>
<evidence type="ECO:0000255" key="1"/>
<evidence type="ECO:0000269" key="2">
    <source>
    </source>
</evidence>
<evidence type="ECO:0000305" key="3"/>
<organism>
    <name type="scientific">Staphylococcus aureus</name>
    <dbReference type="NCBI Taxonomy" id="1280"/>
    <lineage>
        <taxon>Bacteria</taxon>
        <taxon>Bacillati</taxon>
        <taxon>Bacillota</taxon>
        <taxon>Bacilli</taxon>
        <taxon>Bacillales</taxon>
        <taxon>Staphylococcaceae</taxon>
        <taxon>Staphylococcus</taxon>
    </lineage>
</organism>
<gene>
    <name type="primary">agrB</name>
</gene>